<proteinExistence type="inferred from homology"/>
<evidence type="ECO:0000255" key="1">
    <source>
        <dbReference type="HAMAP-Rule" id="MF_01466"/>
    </source>
</evidence>
<reference key="1">
    <citation type="journal article" date="2008" name="J. Bacteriol.">
        <title>Genome sequence of Staphylococcus aureus strain Newman and comparative analysis of staphylococcal genomes: polymorphism and evolution of two major pathogenicity islands.</title>
        <authorList>
            <person name="Baba T."/>
            <person name="Bae T."/>
            <person name="Schneewind O."/>
            <person name="Takeuchi F."/>
            <person name="Hiramatsu K."/>
        </authorList>
    </citation>
    <scope>NUCLEOTIDE SEQUENCE [LARGE SCALE GENOMIC DNA]</scope>
    <source>
        <strain>Newman</strain>
    </source>
</reference>
<accession>A6QKE2</accession>
<comment type="function">
    <text evidence="1">Part of the accessory SecA2/SecY2 system specifically required for export of possible cell wall proteins. The central subunit of a protein translocation channel.</text>
</comment>
<comment type="subunit">
    <text evidence="1">Component of the accessory SecA2/SecY2 protein translocase complex required to export cell wall proteins. May form heterotrimers with SecE and SecG subunits.</text>
</comment>
<comment type="subcellular location">
    <subcellularLocation>
        <location evidence="1">Cell membrane</location>
        <topology evidence="1">Multi-pass membrane protein</topology>
    </subcellularLocation>
</comment>
<comment type="similarity">
    <text evidence="1">Belongs to the SecY/SEC61-alpha family. SecY2 subfamily.</text>
</comment>
<keyword id="KW-1003">Cell membrane</keyword>
<keyword id="KW-0472">Membrane</keyword>
<keyword id="KW-0653">Protein transport</keyword>
<keyword id="KW-0811">Translocation</keyword>
<keyword id="KW-0812">Transmembrane</keyword>
<keyword id="KW-1133">Transmembrane helix</keyword>
<keyword id="KW-0813">Transport</keyword>
<protein>
    <recommendedName>
        <fullName evidence="1">Accessory Sec system protein translocase subunit SecY2</fullName>
    </recommendedName>
</protein>
<organism>
    <name type="scientific">Staphylococcus aureus (strain Newman)</name>
    <dbReference type="NCBI Taxonomy" id="426430"/>
    <lineage>
        <taxon>Bacteria</taxon>
        <taxon>Bacillati</taxon>
        <taxon>Bacillota</taxon>
        <taxon>Bacilli</taxon>
        <taxon>Bacillales</taxon>
        <taxon>Staphylococcaceae</taxon>
        <taxon>Staphylococcus</taxon>
    </lineage>
</organism>
<name>SECY2_STAAE</name>
<sequence length="403" mass="46885">MLKLLQQYEYKIIYKRMLYTCFILFIYILGTNISIVSYNDMQVKHESFFKIAISNMGGDVNTLNIFTLGLGPWLTSMIILMLISYRNMDKYMKQTSLEKHYKERILTLILSVIQSYFVIHEYVSKERVHQDNIYLTILILVTGTMLLVWLADKNSRYGIAGPMPIVMVSIIKSMMHQKMEYIDASHIVIALLIILVIITLFILLFIELVEVRIPYIDLMNVSATNMKSYLSWKVNPAGSITLMMSISAFVFLKSGIHFILSMFNKSISDDMPMLTFDSPVGISVYLVIQMLLGYFLSRFLINTKQKSKDFLKSGNYFSGVKPGKDTERYLNYQARRVCWFGLALVTVIIGIPLYFTLFVPHLSTEIYFSVQLIVLVYISINIAETIRTYLYFDKYKPFLNQYW</sequence>
<feature type="chain" id="PRO_0000414868" description="Accessory Sec system protein translocase subunit SecY2">
    <location>
        <begin position="1"/>
        <end position="403"/>
    </location>
</feature>
<feature type="transmembrane region" description="Helical" evidence="1">
    <location>
        <begin position="17"/>
        <end position="37"/>
    </location>
</feature>
<feature type="transmembrane region" description="Helical" evidence="1">
    <location>
        <begin position="63"/>
        <end position="83"/>
    </location>
</feature>
<feature type="transmembrane region" description="Helical" evidence="1">
    <location>
        <begin position="105"/>
        <end position="125"/>
    </location>
</feature>
<feature type="transmembrane region" description="Helical" evidence="1">
    <location>
        <begin position="131"/>
        <end position="151"/>
    </location>
</feature>
<feature type="transmembrane region" description="Helical" evidence="1">
    <location>
        <begin position="157"/>
        <end position="177"/>
    </location>
</feature>
<feature type="transmembrane region" description="Helical" evidence="1">
    <location>
        <begin position="186"/>
        <end position="206"/>
    </location>
</feature>
<feature type="transmembrane region" description="Helical" evidence="1">
    <location>
        <begin position="240"/>
        <end position="260"/>
    </location>
</feature>
<feature type="transmembrane region" description="Helical" evidence="1">
    <location>
        <begin position="276"/>
        <end position="296"/>
    </location>
</feature>
<feature type="transmembrane region" description="Helical" evidence="1">
    <location>
        <begin position="339"/>
        <end position="359"/>
    </location>
</feature>
<feature type="transmembrane region" description="Helical" evidence="1">
    <location>
        <begin position="366"/>
        <end position="386"/>
    </location>
</feature>
<dbReference type="EMBL" id="AP009351">
    <property type="protein sequence ID" value="BAF68824.1"/>
    <property type="molecule type" value="Genomic_DNA"/>
</dbReference>
<dbReference type="RefSeq" id="WP_000916119.1">
    <property type="nucleotide sequence ID" value="NZ_JBBIAE010000005.1"/>
</dbReference>
<dbReference type="SMR" id="A6QKE2"/>
<dbReference type="KEGG" id="sae:NWMN_2552"/>
<dbReference type="HOGENOM" id="CLU_030313_4_0_9"/>
<dbReference type="Proteomes" id="UP000006386">
    <property type="component" value="Chromosome"/>
</dbReference>
<dbReference type="GO" id="GO:0005886">
    <property type="term" value="C:plasma membrane"/>
    <property type="evidence" value="ECO:0007669"/>
    <property type="project" value="UniProtKB-SubCell"/>
</dbReference>
<dbReference type="GO" id="GO:0065002">
    <property type="term" value="P:intracellular protein transmembrane transport"/>
    <property type="evidence" value="ECO:0007669"/>
    <property type="project" value="UniProtKB-UniRule"/>
</dbReference>
<dbReference type="GO" id="GO:0006605">
    <property type="term" value="P:protein targeting"/>
    <property type="evidence" value="ECO:0007669"/>
    <property type="project" value="UniProtKB-UniRule"/>
</dbReference>
<dbReference type="FunFam" id="1.10.3370.10:FF:000015">
    <property type="entry name" value="Accessory Sec system protein translocase subunit SecY2"/>
    <property type="match status" value="1"/>
</dbReference>
<dbReference type="Gene3D" id="1.10.3370.10">
    <property type="entry name" value="SecY subunit domain"/>
    <property type="match status" value="1"/>
</dbReference>
<dbReference type="HAMAP" id="MF_01466">
    <property type="entry name" value="SecY2"/>
    <property type="match status" value="1"/>
</dbReference>
<dbReference type="InterPro" id="IPR002208">
    <property type="entry name" value="SecY/SEC61-alpha"/>
</dbReference>
<dbReference type="InterPro" id="IPR014269">
    <property type="entry name" value="SecY2"/>
</dbReference>
<dbReference type="InterPro" id="IPR023201">
    <property type="entry name" value="SecY_dom_sf"/>
</dbReference>
<dbReference type="NCBIfam" id="TIGR02920">
    <property type="entry name" value="acc_sec_Y2"/>
    <property type="match status" value="1"/>
</dbReference>
<dbReference type="NCBIfam" id="NF009082">
    <property type="entry name" value="PRK12417.1"/>
    <property type="match status" value="1"/>
</dbReference>
<dbReference type="Pfam" id="PF00344">
    <property type="entry name" value="SecY"/>
    <property type="match status" value="1"/>
</dbReference>
<dbReference type="PIRSF" id="PIRSF004557">
    <property type="entry name" value="SecY"/>
    <property type="match status" value="1"/>
</dbReference>
<dbReference type="PRINTS" id="PR00303">
    <property type="entry name" value="SECYTRNLCASE"/>
</dbReference>
<dbReference type="SUPFAM" id="SSF103491">
    <property type="entry name" value="Preprotein translocase SecY subunit"/>
    <property type="match status" value="1"/>
</dbReference>
<gene>
    <name evidence="1" type="primary">secY2</name>
    <name type="ordered locus">NWMN_2552</name>
</gene>